<comment type="function">
    <text evidence="1">Binds directly to 16S ribosomal RNA.</text>
</comment>
<comment type="similarity">
    <text evidence="1">Belongs to the bacterial ribosomal protein bS20 family.</text>
</comment>
<accession>A8Z4C5</accession>
<proteinExistence type="inferred from homology"/>
<protein>
    <recommendedName>
        <fullName evidence="1">Small ribosomal subunit protein bS20</fullName>
    </recommendedName>
    <alternativeName>
        <fullName evidence="2">30S ribosomal protein S20</fullName>
    </alternativeName>
</protein>
<evidence type="ECO:0000255" key="1">
    <source>
        <dbReference type="HAMAP-Rule" id="MF_00500"/>
    </source>
</evidence>
<evidence type="ECO:0000305" key="2"/>
<feature type="chain" id="PRO_1000126519" description="Small ribosomal subunit protein bS20">
    <location>
        <begin position="1"/>
        <end position="83"/>
    </location>
</feature>
<gene>
    <name evidence="1" type="primary">rpsT</name>
    <name type="ordered locus">USA300HOU_1587</name>
</gene>
<dbReference type="EMBL" id="CP000730">
    <property type="protein sequence ID" value="ABX29594.1"/>
    <property type="molecule type" value="Genomic_DNA"/>
</dbReference>
<dbReference type="RefSeq" id="WP_001274017.1">
    <property type="nucleotide sequence ID" value="NC_010079.1"/>
</dbReference>
<dbReference type="SMR" id="A8Z4C5"/>
<dbReference type="GeneID" id="66839775"/>
<dbReference type="KEGG" id="sax:USA300HOU_1587"/>
<dbReference type="HOGENOM" id="CLU_160655_1_1_9"/>
<dbReference type="GO" id="GO:0005829">
    <property type="term" value="C:cytosol"/>
    <property type="evidence" value="ECO:0007669"/>
    <property type="project" value="TreeGrafter"/>
</dbReference>
<dbReference type="GO" id="GO:0015935">
    <property type="term" value="C:small ribosomal subunit"/>
    <property type="evidence" value="ECO:0007669"/>
    <property type="project" value="TreeGrafter"/>
</dbReference>
<dbReference type="GO" id="GO:0070181">
    <property type="term" value="F:small ribosomal subunit rRNA binding"/>
    <property type="evidence" value="ECO:0007669"/>
    <property type="project" value="TreeGrafter"/>
</dbReference>
<dbReference type="GO" id="GO:0003735">
    <property type="term" value="F:structural constituent of ribosome"/>
    <property type="evidence" value="ECO:0007669"/>
    <property type="project" value="InterPro"/>
</dbReference>
<dbReference type="GO" id="GO:0006412">
    <property type="term" value="P:translation"/>
    <property type="evidence" value="ECO:0007669"/>
    <property type="project" value="UniProtKB-UniRule"/>
</dbReference>
<dbReference type="Gene3D" id="1.20.58.110">
    <property type="entry name" value="Ribosomal protein S20"/>
    <property type="match status" value="1"/>
</dbReference>
<dbReference type="HAMAP" id="MF_00500">
    <property type="entry name" value="Ribosomal_bS20"/>
    <property type="match status" value="1"/>
</dbReference>
<dbReference type="InterPro" id="IPR002583">
    <property type="entry name" value="Ribosomal_bS20"/>
</dbReference>
<dbReference type="InterPro" id="IPR036510">
    <property type="entry name" value="Ribosomal_bS20_sf"/>
</dbReference>
<dbReference type="NCBIfam" id="TIGR00029">
    <property type="entry name" value="S20"/>
    <property type="match status" value="1"/>
</dbReference>
<dbReference type="PANTHER" id="PTHR33398">
    <property type="entry name" value="30S RIBOSOMAL PROTEIN S20"/>
    <property type="match status" value="1"/>
</dbReference>
<dbReference type="PANTHER" id="PTHR33398:SF1">
    <property type="entry name" value="SMALL RIBOSOMAL SUBUNIT PROTEIN BS20C"/>
    <property type="match status" value="1"/>
</dbReference>
<dbReference type="Pfam" id="PF01649">
    <property type="entry name" value="Ribosomal_S20p"/>
    <property type="match status" value="1"/>
</dbReference>
<dbReference type="SUPFAM" id="SSF46992">
    <property type="entry name" value="Ribosomal protein S20"/>
    <property type="match status" value="1"/>
</dbReference>
<reference key="1">
    <citation type="journal article" date="2007" name="BMC Microbiol.">
        <title>Subtle genetic changes enhance virulence of methicillin resistant and sensitive Staphylococcus aureus.</title>
        <authorList>
            <person name="Highlander S.K."/>
            <person name="Hulten K.G."/>
            <person name="Qin X."/>
            <person name="Jiang H."/>
            <person name="Yerrapragada S."/>
            <person name="Mason E.O. Jr."/>
            <person name="Shang Y."/>
            <person name="Williams T.M."/>
            <person name="Fortunov R.M."/>
            <person name="Liu Y."/>
            <person name="Igboeli O."/>
            <person name="Petrosino J."/>
            <person name="Tirumalai M."/>
            <person name="Uzman A."/>
            <person name="Fox G.E."/>
            <person name="Cardenas A.M."/>
            <person name="Muzny D.M."/>
            <person name="Hemphill L."/>
            <person name="Ding Y."/>
            <person name="Dugan S."/>
            <person name="Blyth P.R."/>
            <person name="Buhay C.J."/>
            <person name="Dinh H.H."/>
            <person name="Hawes A.C."/>
            <person name="Holder M."/>
            <person name="Kovar C.L."/>
            <person name="Lee S.L."/>
            <person name="Liu W."/>
            <person name="Nazareth L.V."/>
            <person name="Wang Q."/>
            <person name="Zhou J."/>
            <person name="Kaplan S.L."/>
            <person name="Weinstock G.M."/>
        </authorList>
    </citation>
    <scope>NUCLEOTIDE SEQUENCE [LARGE SCALE GENOMIC DNA]</scope>
    <source>
        <strain>USA300 / TCH1516</strain>
    </source>
</reference>
<sequence>MANIKSAIKRVKTTEKAEARNISQKSAMRTAVKNAKTAVSNNADNKNELVSLAVKLVDKAAQSNLIHSNKADRIKSQLMTANK</sequence>
<organism>
    <name type="scientific">Staphylococcus aureus (strain USA300 / TCH1516)</name>
    <dbReference type="NCBI Taxonomy" id="451516"/>
    <lineage>
        <taxon>Bacteria</taxon>
        <taxon>Bacillati</taxon>
        <taxon>Bacillota</taxon>
        <taxon>Bacilli</taxon>
        <taxon>Bacillales</taxon>
        <taxon>Staphylococcaceae</taxon>
        <taxon>Staphylococcus</taxon>
    </lineage>
</organism>
<name>RS20_STAAT</name>
<keyword id="KW-0687">Ribonucleoprotein</keyword>
<keyword id="KW-0689">Ribosomal protein</keyword>
<keyword id="KW-0694">RNA-binding</keyword>
<keyword id="KW-0699">rRNA-binding</keyword>